<evidence type="ECO:0000255" key="1"/>
<evidence type="ECO:0000256" key="2">
    <source>
        <dbReference type="SAM" id="MobiDB-lite"/>
    </source>
</evidence>
<evidence type="ECO:0000269" key="3">
    <source>
    </source>
</evidence>
<evidence type="ECO:0000269" key="4">
    <source>
    </source>
</evidence>
<evidence type="ECO:0000303" key="5">
    <source>
    </source>
</evidence>
<evidence type="ECO:0000303" key="6">
    <source>
    </source>
</evidence>
<evidence type="ECO:0000305" key="7"/>
<evidence type="ECO:0000312" key="8">
    <source>
        <dbReference type="EMBL" id="BAF96742.1"/>
    </source>
</evidence>
<evidence type="ECO:0000312" key="9">
    <source>
        <dbReference type="EMBL" id="EAA44045.3"/>
    </source>
</evidence>
<gene>
    <name evidence="8" type="primary">Tret1</name>
    <name type="ORF">AGAP005563</name>
</gene>
<dbReference type="EMBL" id="AAAB01008960">
    <property type="protein sequence ID" value="EAA44045.3"/>
    <property type="molecule type" value="Genomic_DNA"/>
</dbReference>
<dbReference type="EMBL" id="AAAB01008960">
    <property type="protein sequence ID" value="EDO63685.1"/>
    <property type="molecule type" value="Genomic_DNA"/>
</dbReference>
<dbReference type="EMBL" id="AAAB01008960">
    <property type="protein sequence ID" value="EDO63686.1"/>
    <property type="molecule type" value="Genomic_DNA"/>
</dbReference>
<dbReference type="EMBL" id="AB369548">
    <property type="protein sequence ID" value="BAF96742.1"/>
    <property type="molecule type" value="mRNA"/>
</dbReference>
<dbReference type="RefSeq" id="XP_001688679.1">
    <molecule id="Q7PIR5-2"/>
    <property type="nucleotide sequence ID" value="XM_001688627.1"/>
</dbReference>
<dbReference type="RefSeq" id="XP_001688680.1">
    <molecule id="Q7PIR5-2"/>
    <property type="nucleotide sequence ID" value="XM_001688628.1"/>
</dbReference>
<dbReference type="RefSeq" id="XP_315568.3">
    <property type="nucleotide sequence ID" value="XM_315568.4"/>
</dbReference>
<dbReference type="SMR" id="Q7PIR5"/>
<dbReference type="FunCoup" id="Q7PIR5">
    <property type="interactions" value="186"/>
</dbReference>
<dbReference type="STRING" id="7165.Q7PIR5"/>
<dbReference type="GlyCosmos" id="Q7PIR5">
    <property type="glycosylation" value="1 site, No reported glycans"/>
</dbReference>
<dbReference type="PaxDb" id="7165-AGAP005563-PA"/>
<dbReference type="EnsemblMetazoa" id="AGAP005563-RA">
    <molecule id="Q7PIR5-2"/>
    <property type="protein sequence ID" value="AGAP005563-PA"/>
    <property type="gene ID" value="AGAP005563"/>
</dbReference>
<dbReference type="GeneID" id="1276247"/>
<dbReference type="KEGG" id="aga:1276247"/>
<dbReference type="CTD" id="36248"/>
<dbReference type="VEuPathDB" id="VectorBase:AGAMI1_009608"/>
<dbReference type="VEuPathDB" id="VectorBase:AGAP005563"/>
<dbReference type="eggNOG" id="KOG0254">
    <property type="taxonomic scope" value="Eukaryota"/>
</dbReference>
<dbReference type="HOGENOM" id="CLU_016710_0_0_1"/>
<dbReference type="InParanoid" id="Q7PIR5"/>
<dbReference type="OMA" id="AISMIYV"/>
<dbReference type="PhylomeDB" id="Q7PIR5"/>
<dbReference type="SABIO-RK" id="Q7PIR5"/>
<dbReference type="Proteomes" id="UP000007062">
    <property type="component" value="Chromosome 2L"/>
</dbReference>
<dbReference type="GO" id="GO:0016020">
    <property type="term" value="C:membrane"/>
    <property type="evidence" value="ECO:0000318"/>
    <property type="project" value="GO_Central"/>
</dbReference>
<dbReference type="GO" id="GO:0005886">
    <property type="term" value="C:plasma membrane"/>
    <property type="evidence" value="ECO:0000314"/>
    <property type="project" value="UniProtKB"/>
</dbReference>
<dbReference type="GO" id="GO:0051119">
    <property type="term" value="F:sugar transmembrane transporter activity"/>
    <property type="evidence" value="ECO:0007669"/>
    <property type="project" value="InterPro"/>
</dbReference>
<dbReference type="GO" id="GO:0022857">
    <property type="term" value="F:transmembrane transporter activity"/>
    <property type="evidence" value="ECO:0000318"/>
    <property type="project" value="GO_Central"/>
</dbReference>
<dbReference type="GO" id="GO:0015574">
    <property type="term" value="F:trehalose transmembrane transporter activity"/>
    <property type="evidence" value="ECO:0000314"/>
    <property type="project" value="UniProtKB"/>
</dbReference>
<dbReference type="GO" id="GO:0055085">
    <property type="term" value="P:transmembrane transport"/>
    <property type="evidence" value="ECO:0000318"/>
    <property type="project" value="GO_Central"/>
</dbReference>
<dbReference type="GO" id="GO:0015771">
    <property type="term" value="P:trehalose transport"/>
    <property type="evidence" value="ECO:0000314"/>
    <property type="project" value="UniProtKB"/>
</dbReference>
<dbReference type="CDD" id="cd17358">
    <property type="entry name" value="MFS_GLUT6_8_Class3_like"/>
    <property type="match status" value="1"/>
</dbReference>
<dbReference type="FunFam" id="1.20.1250.20:FF:000055">
    <property type="entry name" value="Facilitated trehalose transporter Tret1-2 homolog"/>
    <property type="match status" value="1"/>
</dbReference>
<dbReference type="Gene3D" id="1.20.1250.20">
    <property type="entry name" value="MFS general substrate transporter like domains"/>
    <property type="match status" value="1"/>
</dbReference>
<dbReference type="InterPro" id="IPR020846">
    <property type="entry name" value="MFS_dom"/>
</dbReference>
<dbReference type="InterPro" id="IPR044775">
    <property type="entry name" value="MFS_ERD6/Tret1-like"/>
</dbReference>
<dbReference type="InterPro" id="IPR005828">
    <property type="entry name" value="MFS_sugar_transport-like"/>
</dbReference>
<dbReference type="InterPro" id="IPR036259">
    <property type="entry name" value="MFS_trans_sf"/>
</dbReference>
<dbReference type="InterPro" id="IPR050549">
    <property type="entry name" value="MFS_Trehalose_Transporter"/>
</dbReference>
<dbReference type="InterPro" id="IPR003663">
    <property type="entry name" value="Sugar/inositol_transpt"/>
</dbReference>
<dbReference type="InterPro" id="IPR005829">
    <property type="entry name" value="Sugar_transporter_CS"/>
</dbReference>
<dbReference type="NCBIfam" id="TIGR00879">
    <property type="entry name" value="SP"/>
    <property type="match status" value="1"/>
</dbReference>
<dbReference type="PANTHER" id="PTHR48021">
    <property type="match status" value="1"/>
</dbReference>
<dbReference type="PANTHER" id="PTHR48021:SF96">
    <property type="entry name" value="FACILITATED TREHALOSE TRANSPORTER TRET1-1-RELATED"/>
    <property type="match status" value="1"/>
</dbReference>
<dbReference type="Pfam" id="PF00083">
    <property type="entry name" value="Sugar_tr"/>
    <property type="match status" value="1"/>
</dbReference>
<dbReference type="PRINTS" id="PR00171">
    <property type="entry name" value="SUGRTRNSPORT"/>
</dbReference>
<dbReference type="SUPFAM" id="SSF103473">
    <property type="entry name" value="MFS general substrate transporter"/>
    <property type="match status" value="1"/>
</dbReference>
<dbReference type="PROSITE" id="PS50850">
    <property type="entry name" value="MFS"/>
    <property type="match status" value="1"/>
</dbReference>
<dbReference type="PROSITE" id="PS00216">
    <property type="entry name" value="SUGAR_TRANSPORT_1"/>
    <property type="match status" value="1"/>
</dbReference>
<dbReference type="PROSITE" id="PS00217">
    <property type="entry name" value="SUGAR_TRANSPORT_2"/>
    <property type="match status" value="1"/>
</dbReference>
<protein>
    <recommendedName>
        <fullName evidence="6">Facilitated trehalose transporter Tret1</fullName>
        <shortName evidence="6">AgTRET1</shortName>
    </recommendedName>
</protein>
<keyword id="KW-0025">Alternative splicing</keyword>
<keyword id="KW-1003">Cell membrane</keyword>
<keyword id="KW-0325">Glycoprotein</keyword>
<keyword id="KW-0472">Membrane</keyword>
<keyword id="KW-1185">Reference proteome</keyword>
<keyword id="KW-0762">Sugar transport</keyword>
<keyword id="KW-0812">Transmembrane</keyword>
<keyword id="KW-1133">Transmembrane helix</keyword>
<keyword id="KW-0813">Transport</keyword>
<accession>Q7PIR5</accession>
<accession>A7UTR3</accession>
<accession>A9ZSY1</accession>
<feature type="chain" id="PRO_0000395538" description="Facilitated trehalose transporter Tret1">
    <location>
        <begin position="1"/>
        <end position="793"/>
    </location>
</feature>
<feature type="topological domain" description="Cytoplasmic" evidence="1">
    <location>
        <begin position="1"/>
        <end position="326"/>
    </location>
</feature>
<feature type="transmembrane region" description="Helical; Name=1" evidence="1">
    <location>
        <begin position="327"/>
        <end position="347"/>
    </location>
</feature>
<feature type="topological domain" description="Extracellular" evidence="1">
    <location>
        <begin position="348"/>
        <end position="376"/>
    </location>
</feature>
<feature type="transmembrane region" description="Helical; Name=2" evidence="1">
    <location>
        <begin position="377"/>
        <end position="397"/>
    </location>
</feature>
<feature type="topological domain" description="Cytoplasmic" evidence="1">
    <location>
        <begin position="398"/>
        <end position="411"/>
    </location>
</feature>
<feature type="transmembrane region" description="Helical; Name=3" evidence="1">
    <location>
        <begin position="412"/>
        <end position="432"/>
    </location>
</feature>
<feature type="topological domain" description="Extracellular" evidence="1">
    <location>
        <begin position="433"/>
        <end position="434"/>
    </location>
</feature>
<feature type="transmembrane region" description="Helical; Name=4" evidence="1">
    <location>
        <begin position="435"/>
        <end position="455"/>
    </location>
</feature>
<feature type="topological domain" description="Cytoplasmic" evidence="1">
    <location>
        <begin position="456"/>
        <end position="460"/>
    </location>
</feature>
<feature type="transmembrane region" description="Helical; Name=5" evidence="1">
    <location>
        <begin position="461"/>
        <end position="481"/>
    </location>
</feature>
<feature type="topological domain" description="Extracellular" evidence="1">
    <location>
        <begin position="482"/>
        <end position="488"/>
    </location>
</feature>
<feature type="transmembrane region" description="Helical; Name=6" evidence="1">
    <location>
        <begin position="489"/>
        <end position="509"/>
    </location>
</feature>
<feature type="topological domain" description="Cytoplasmic" evidence="1">
    <location>
        <begin position="510"/>
        <end position="572"/>
    </location>
</feature>
<feature type="transmembrane region" description="Helical; Name=7" evidence="1">
    <location>
        <begin position="573"/>
        <end position="593"/>
    </location>
</feature>
<feature type="topological domain" description="Extracellular" evidence="1">
    <location>
        <begin position="594"/>
        <end position="609"/>
    </location>
</feature>
<feature type="transmembrane region" description="Helical; Name=8" evidence="1">
    <location>
        <begin position="610"/>
        <end position="630"/>
    </location>
</feature>
<feature type="topological domain" description="Cytoplasmic" evidence="1">
    <location>
        <begin position="631"/>
        <end position="636"/>
    </location>
</feature>
<feature type="transmembrane region" description="Helical; Name=9" evidence="1">
    <location>
        <begin position="637"/>
        <end position="657"/>
    </location>
</feature>
<feature type="topological domain" description="Extracellular" evidence="1">
    <location>
        <begin position="658"/>
        <end position="668"/>
    </location>
</feature>
<feature type="transmembrane region" description="Helical; Name=10" evidence="1">
    <location>
        <begin position="669"/>
        <end position="689"/>
    </location>
</feature>
<feature type="topological domain" description="Cytoplasmic" evidence="1">
    <location>
        <begin position="690"/>
        <end position="703"/>
    </location>
</feature>
<feature type="transmembrane region" description="Helical; Name=11" evidence="1">
    <location>
        <begin position="704"/>
        <end position="724"/>
    </location>
</feature>
<feature type="topological domain" description="Extracellular" evidence="1">
    <location>
        <begin position="725"/>
        <end position="737"/>
    </location>
</feature>
<feature type="transmembrane region" description="Helical; Name=12" evidence="1">
    <location>
        <begin position="738"/>
        <end position="758"/>
    </location>
</feature>
<feature type="topological domain" description="Cytoplasmic" evidence="1">
    <location>
        <begin position="759"/>
        <end position="793"/>
    </location>
</feature>
<feature type="region of interest" description="Disordered" evidence="2">
    <location>
        <begin position="99"/>
        <end position="148"/>
    </location>
</feature>
<feature type="region of interest" description="Disordered" evidence="2">
    <location>
        <begin position="213"/>
        <end position="235"/>
    </location>
</feature>
<feature type="compositionally biased region" description="Low complexity" evidence="2">
    <location>
        <begin position="104"/>
        <end position="113"/>
    </location>
</feature>
<feature type="compositionally biased region" description="Acidic residues" evidence="2">
    <location>
        <begin position="115"/>
        <end position="125"/>
    </location>
</feature>
<feature type="compositionally biased region" description="Basic and acidic residues" evidence="2">
    <location>
        <begin position="213"/>
        <end position="223"/>
    </location>
</feature>
<feature type="glycosylation site" description="N-linked (GlcNAc...) asparagine" evidence="1">
    <location>
        <position position="364"/>
    </location>
</feature>
<feature type="splice variant" id="VSP_039518" description="In isoform B." evidence="5">
    <original>MNRKVGPVLEYSRRFSRVLCALRDEIRD</original>
    <variation>MVKILMRADTHVSFSVPIEEPVAKCTFS</variation>
    <location>
        <begin position="1"/>
        <end position="28"/>
    </location>
</feature>
<feature type="splice variant" id="VSP_039519" description="In isoform B." evidence="5">
    <location>
        <begin position="29"/>
        <end position="331"/>
    </location>
</feature>
<organism>
    <name type="scientific">Anopheles gambiae</name>
    <name type="common">African malaria mosquito</name>
    <dbReference type="NCBI Taxonomy" id="7165"/>
    <lineage>
        <taxon>Eukaryota</taxon>
        <taxon>Metazoa</taxon>
        <taxon>Ecdysozoa</taxon>
        <taxon>Arthropoda</taxon>
        <taxon>Hexapoda</taxon>
        <taxon>Insecta</taxon>
        <taxon>Pterygota</taxon>
        <taxon>Neoptera</taxon>
        <taxon>Endopterygota</taxon>
        <taxon>Diptera</taxon>
        <taxon>Nematocera</taxon>
        <taxon>Culicoidea</taxon>
        <taxon>Culicidae</taxon>
        <taxon>Anophelinae</taxon>
        <taxon>Anopheles</taxon>
    </lineage>
</organism>
<reference evidence="7 9" key="1">
    <citation type="journal article" date="2002" name="Science">
        <title>The genome sequence of the malaria mosquito Anopheles gambiae.</title>
        <authorList>
            <person name="Holt R.A."/>
            <person name="Subramanian G.M."/>
            <person name="Halpern A."/>
            <person name="Sutton G.G."/>
            <person name="Charlab R."/>
            <person name="Nusskern D.R."/>
            <person name="Wincker P."/>
            <person name="Clark A.G."/>
            <person name="Ribeiro J.M.C."/>
            <person name="Wides R."/>
            <person name="Salzberg S.L."/>
            <person name="Loftus B.J."/>
            <person name="Yandell M.D."/>
            <person name="Majoros W.H."/>
            <person name="Rusch D.B."/>
            <person name="Lai Z."/>
            <person name="Kraft C.L."/>
            <person name="Abril J.F."/>
            <person name="Anthouard V."/>
            <person name="Arensburger P."/>
            <person name="Atkinson P.W."/>
            <person name="Baden H."/>
            <person name="de Berardinis V."/>
            <person name="Baldwin D."/>
            <person name="Benes V."/>
            <person name="Biedler J."/>
            <person name="Blass C."/>
            <person name="Bolanos R."/>
            <person name="Boscus D."/>
            <person name="Barnstead M."/>
            <person name="Cai S."/>
            <person name="Center A."/>
            <person name="Chaturverdi K."/>
            <person name="Christophides G.K."/>
            <person name="Chrystal M.A.M."/>
            <person name="Clamp M."/>
            <person name="Cravchik A."/>
            <person name="Curwen V."/>
            <person name="Dana A."/>
            <person name="Delcher A."/>
            <person name="Dew I."/>
            <person name="Evans C.A."/>
            <person name="Flanigan M."/>
            <person name="Grundschober-Freimoser A."/>
            <person name="Friedli L."/>
            <person name="Gu Z."/>
            <person name="Guan P."/>
            <person name="Guigo R."/>
            <person name="Hillenmeyer M.E."/>
            <person name="Hladun S.L."/>
            <person name="Hogan J.R."/>
            <person name="Hong Y.S."/>
            <person name="Hoover J."/>
            <person name="Jaillon O."/>
            <person name="Ke Z."/>
            <person name="Kodira C.D."/>
            <person name="Kokoza E."/>
            <person name="Koutsos A."/>
            <person name="Letunic I."/>
            <person name="Levitsky A.A."/>
            <person name="Liang Y."/>
            <person name="Lin J.-J."/>
            <person name="Lobo N.F."/>
            <person name="Lopez J.R."/>
            <person name="Malek J.A."/>
            <person name="McIntosh T.C."/>
            <person name="Meister S."/>
            <person name="Miller J.R."/>
            <person name="Mobarry C."/>
            <person name="Mongin E."/>
            <person name="Murphy S.D."/>
            <person name="O'Brochta D.A."/>
            <person name="Pfannkoch C."/>
            <person name="Qi R."/>
            <person name="Regier M.A."/>
            <person name="Remington K."/>
            <person name="Shao H."/>
            <person name="Sharakhova M.V."/>
            <person name="Sitter C.D."/>
            <person name="Shetty J."/>
            <person name="Smith T.J."/>
            <person name="Strong R."/>
            <person name="Sun J."/>
            <person name="Thomasova D."/>
            <person name="Ton L.Q."/>
            <person name="Topalis P."/>
            <person name="Tu Z.J."/>
            <person name="Unger M.F."/>
            <person name="Walenz B."/>
            <person name="Wang A.H."/>
            <person name="Wang J."/>
            <person name="Wang M."/>
            <person name="Wang X."/>
            <person name="Woodford K.J."/>
            <person name="Wortman J.R."/>
            <person name="Wu M."/>
            <person name="Yao A."/>
            <person name="Zdobnov E.M."/>
            <person name="Zhang H."/>
            <person name="Zhao Q."/>
            <person name="Zhao S."/>
            <person name="Zhu S.C."/>
            <person name="Zhimulev I."/>
            <person name="Coluzzi M."/>
            <person name="della Torre A."/>
            <person name="Roth C.W."/>
            <person name="Louis C."/>
            <person name="Kalush F."/>
            <person name="Mural R.J."/>
            <person name="Myers E.W."/>
            <person name="Adams M.D."/>
            <person name="Smith H.O."/>
            <person name="Broder S."/>
            <person name="Gardner M.J."/>
            <person name="Fraser C.M."/>
            <person name="Birney E."/>
            <person name="Bork P."/>
            <person name="Brey P.T."/>
            <person name="Venter J.C."/>
            <person name="Weissenbach J."/>
            <person name="Kafatos F.C."/>
            <person name="Collins F.H."/>
            <person name="Hoffman S.L."/>
        </authorList>
    </citation>
    <scope>NUCLEOTIDE SEQUENCE [LARGE SCALE GENOMIC DNA]</scope>
    <scope>ALTERNATIVE SPLICING</scope>
    <source>
        <strain evidence="9">PEST</strain>
    </source>
</reference>
<reference evidence="7 8" key="2">
    <citation type="journal article" date="2010" name="Insect Biochem. Mol. Biol.">
        <title>The trehalose transporter 1 gene sequence is conserved in insects and encodes proteins with different kinetic properties involved in trehalose import into peripheral tissues.</title>
        <authorList>
            <person name="Kanamori Y."/>
            <person name="Saito Y."/>
            <person name="Hagiwara-Komoda Y."/>
            <person name="Tanaka D."/>
            <person name="Mitsumasu K."/>
            <person name="Kikuta S."/>
            <person name="Watanabe M."/>
            <person name="Cornette R."/>
            <person name="Kikawada T."/>
            <person name="Okuda T."/>
        </authorList>
    </citation>
    <scope>NUCLEOTIDE SEQUENCE [MRNA] OF 290-793 (ISOFORM A)</scope>
    <scope>FUNCTION</scope>
    <scope>BIOPHYSICOCHEMICAL PROPERTIES</scope>
    <scope>SUBCELLULAR LOCATION</scope>
</reference>
<name>TRET1_ANOGA</name>
<sequence length="793" mass="88226">MNRKVGPVLEYSRRFSRVLCALRDEIRDPLQYGYQRVNTAEGSLSTSTTATSLDTIVLDTNAEDLASVPPRTLQHHQPQRTFSPILETDDTNPFLEPVEKAKSKSSLKSSRVSFDQEDDRFDEDENSFRKQREHFQKHKSHSTSEHKSQLIKELRHLLATDNRRQFQGKKHVSLDVKSAKVLEQLLKASSSSDDFEGQRKEFQERKHKSLDARHISFKFDKEPSPSSSDEDFEPSTSLLRIDADITKPVIIDLKDLDSSDEEDYISSRKHFQQSKSMSTDSRKSIRFLEMEMGTKEENMRTAVPFVRQITEEGKPKLEVYRPTTNPIYIWTQVLAALSVSLGSMVVGFSSAYTSPALVSMKDRNITSFEVTDQSGSWVGGIMPLAGLAGGILGGPMIEYLGRKNTILATATPFIISWLLIGCATHVAMVLVGRALSGLCVGIASLSLPVYLGETVQPEVRGTLGLLPTAFGNIGILLCFVAGKYLDWSGLAFLGAALPIPFLLLMFLIPETPRWYVSRNREDRARKALQWLRGRKADVEPELKGISKSHQDAERHASSSAMLDLLNKANLKPLLISLGLMFFQQLSGINAVIFYTVQIFQSAGSTIDEKLCTIIVGVVNFIATFIATVLIDRLGRKILLYISDVAMIITLMTLGTFFYMKNNGDDVSEIGWLPLAAFVVFVVGFSLGFGPIPWLMMGEILPGKIRGSAASVATAFNWSCTFVVTKTFADITASIGNHGAFWMFGSICIVGLLFVIVYVPETQGKSLEDIERKMMGRVRRMSSVANIKPLSFNM</sequence>
<proteinExistence type="evidence at protein level"/>
<comment type="function">
    <text evidence="4">High-capacity facilitative transporter for trehalose. Does not transport maltose, sucrose or lactose. Mediates the bidirectional transfer of trehalose. Responsible for the transport of trehalose synthesized in the fat body and the incorporation of trehalose into other tissues that require a carbon source, thereby regulating trehalose levels in the hemolymph.</text>
</comment>
<comment type="biophysicochemical properties">
    <kinetics>
        <KM evidence="4">45.74 mM for trehalose</KM>
    </kinetics>
</comment>
<comment type="subcellular location">
    <subcellularLocation>
        <location evidence="4">Cell membrane</location>
        <topology evidence="1 4">Multi-pass membrane protein</topology>
    </subcellularLocation>
</comment>
<comment type="alternative products">
    <event type="alternative splicing"/>
    <isoform>
        <id>Q7PIR5-1</id>
        <name evidence="3">A</name>
        <sequence type="displayed"/>
    </isoform>
    <isoform>
        <id>Q7PIR5-2</id>
        <name evidence="3">B</name>
        <name evidence="3">C</name>
        <sequence type="described" ref="VSP_039518 VSP_039519"/>
    </isoform>
</comment>
<comment type="similarity">
    <text evidence="1 4">Belongs to the major facilitator superfamily. Sugar transporter (TC 2.A.1.1) family. Trehalose transporter subfamily.</text>
</comment>